<evidence type="ECO:0000255" key="1">
    <source>
        <dbReference type="HAMAP-Rule" id="MF_00676"/>
    </source>
</evidence>
<comment type="similarity">
    <text evidence="1">Belongs to the UPF0260 family.</text>
</comment>
<reference key="1">
    <citation type="journal article" date="2003" name="Proc. Natl. Acad. Sci. U.S.A.">
        <title>The complete genome sequence of the Arabidopsis and tomato pathogen Pseudomonas syringae pv. tomato DC3000.</title>
        <authorList>
            <person name="Buell C.R."/>
            <person name="Joardar V."/>
            <person name="Lindeberg M."/>
            <person name="Selengut J."/>
            <person name="Paulsen I.T."/>
            <person name="Gwinn M.L."/>
            <person name="Dodson R.J."/>
            <person name="DeBoy R.T."/>
            <person name="Durkin A.S."/>
            <person name="Kolonay J.F."/>
            <person name="Madupu R."/>
            <person name="Daugherty S.C."/>
            <person name="Brinkac L.M."/>
            <person name="Beanan M.J."/>
            <person name="Haft D.H."/>
            <person name="Nelson W.C."/>
            <person name="Davidsen T.M."/>
            <person name="Zafar N."/>
            <person name="Zhou L."/>
            <person name="Liu J."/>
            <person name="Yuan Q."/>
            <person name="Khouri H.M."/>
            <person name="Fedorova N.B."/>
            <person name="Tran B."/>
            <person name="Russell D."/>
            <person name="Berry K.J."/>
            <person name="Utterback T.R."/>
            <person name="Van Aken S.E."/>
            <person name="Feldblyum T.V."/>
            <person name="D'Ascenzo M."/>
            <person name="Deng W.-L."/>
            <person name="Ramos A.R."/>
            <person name="Alfano J.R."/>
            <person name="Cartinhour S."/>
            <person name="Chatterjee A.K."/>
            <person name="Delaney T.P."/>
            <person name="Lazarowitz S.G."/>
            <person name="Martin G.B."/>
            <person name="Schneider D.J."/>
            <person name="Tang X."/>
            <person name="Bender C.L."/>
            <person name="White O."/>
            <person name="Fraser C.M."/>
            <person name="Collmer A."/>
        </authorList>
    </citation>
    <scope>NUCLEOTIDE SEQUENCE [LARGE SCALE GENOMIC DNA]</scope>
    <source>
        <strain>ATCC BAA-871 / DC3000</strain>
    </source>
</reference>
<gene>
    <name type="ordered locus">PSPTO_3918</name>
</gene>
<name>Y3918_PSESM</name>
<feature type="chain" id="PRO_0000214587" description="UPF0260 protein PSPTO_3918">
    <location>
        <begin position="1"/>
        <end position="149"/>
    </location>
</feature>
<keyword id="KW-1185">Reference proteome</keyword>
<organism>
    <name type="scientific">Pseudomonas syringae pv. tomato (strain ATCC BAA-871 / DC3000)</name>
    <dbReference type="NCBI Taxonomy" id="223283"/>
    <lineage>
        <taxon>Bacteria</taxon>
        <taxon>Pseudomonadati</taxon>
        <taxon>Pseudomonadota</taxon>
        <taxon>Gammaproteobacteria</taxon>
        <taxon>Pseudomonadales</taxon>
        <taxon>Pseudomonadaceae</taxon>
        <taxon>Pseudomonas</taxon>
    </lineage>
</organism>
<accession>Q87Y85</accession>
<sequence length="149" mass="17146">MAAKVEPFWIRKTLDQLDTQEWESLCDGCGLCCLQKLEDEEDNSVYYTRIACKLLDLKTCQCSDYANRRASVPDCIQLTPGQADEFKWLPPTCGYRLVSEGKDLPLWHHLVCGDRTAVHHERISQSGRMLSEKNVAEDDWEDYLIFRAG</sequence>
<protein>
    <recommendedName>
        <fullName evidence="1">UPF0260 protein PSPTO_3918</fullName>
    </recommendedName>
</protein>
<proteinExistence type="inferred from homology"/>
<dbReference type="EMBL" id="AE016853">
    <property type="protein sequence ID" value="AAO57384.1"/>
    <property type="molecule type" value="Genomic_DNA"/>
</dbReference>
<dbReference type="RefSeq" id="NP_793689.1">
    <property type="nucleotide sequence ID" value="NC_004578.1"/>
</dbReference>
<dbReference type="RefSeq" id="WP_005619852.1">
    <property type="nucleotide sequence ID" value="NC_004578.1"/>
</dbReference>
<dbReference type="STRING" id="223283.PSPTO_3918"/>
<dbReference type="KEGG" id="pst:PSPTO_3918"/>
<dbReference type="PATRIC" id="fig|223283.9.peg.4017"/>
<dbReference type="eggNOG" id="COG2983">
    <property type="taxonomic scope" value="Bacteria"/>
</dbReference>
<dbReference type="HOGENOM" id="CLU_109769_0_1_6"/>
<dbReference type="OrthoDB" id="9786855at2"/>
<dbReference type="PhylomeDB" id="Q87Y85"/>
<dbReference type="Proteomes" id="UP000002515">
    <property type="component" value="Chromosome"/>
</dbReference>
<dbReference type="HAMAP" id="MF_00676">
    <property type="entry name" value="UPF0260"/>
    <property type="match status" value="1"/>
</dbReference>
<dbReference type="InterPro" id="IPR005358">
    <property type="entry name" value="Puta_zinc/iron-chelating_dom"/>
</dbReference>
<dbReference type="InterPro" id="IPR008228">
    <property type="entry name" value="UCP006173"/>
</dbReference>
<dbReference type="NCBIfam" id="NF003501">
    <property type="entry name" value="PRK05170.1-5"/>
    <property type="match status" value="1"/>
</dbReference>
<dbReference type="NCBIfam" id="NF003502">
    <property type="entry name" value="PRK05170.1-6"/>
    <property type="match status" value="1"/>
</dbReference>
<dbReference type="NCBIfam" id="NF003507">
    <property type="entry name" value="PRK05170.2-5"/>
    <property type="match status" value="1"/>
</dbReference>
<dbReference type="PANTHER" id="PTHR37421">
    <property type="entry name" value="UPF0260 PROTEIN YCGN"/>
    <property type="match status" value="1"/>
</dbReference>
<dbReference type="PANTHER" id="PTHR37421:SF1">
    <property type="entry name" value="UPF0260 PROTEIN YCGN"/>
    <property type="match status" value="1"/>
</dbReference>
<dbReference type="Pfam" id="PF03692">
    <property type="entry name" value="CxxCxxCC"/>
    <property type="match status" value="1"/>
</dbReference>
<dbReference type="PIRSF" id="PIRSF006173">
    <property type="entry name" value="UCP006173"/>
    <property type="match status" value="1"/>
</dbReference>